<organism>
    <name type="scientific">Medicago sativa</name>
    <name type="common">Alfalfa</name>
    <dbReference type="NCBI Taxonomy" id="3879"/>
    <lineage>
        <taxon>Eukaryota</taxon>
        <taxon>Viridiplantae</taxon>
        <taxon>Streptophyta</taxon>
        <taxon>Embryophyta</taxon>
        <taxon>Tracheophyta</taxon>
        <taxon>Spermatophyta</taxon>
        <taxon>Magnoliopsida</taxon>
        <taxon>eudicotyledons</taxon>
        <taxon>Gunneridae</taxon>
        <taxon>Pentapetalae</taxon>
        <taxon>rosids</taxon>
        <taxon>fabids</taxon>
        <taxon>Fabales</taxon>
        <taxon>Fabaceae</taxon>
        <taxon>Papilionoideae</taxon>
        <taxon>50 kb inversion clade</taxon>
        <taxon>NPAAA clade</taxon>
        <taxon>Hologalegina</taxon>
        <taxon>IRL clade</taxon>
        <taxon>Trifolieae</taxon>
        <taxon>Medicago</taxon>
    </lineage>
</organism>
<keyword id="KW-0378">Hydrolase</keyword>
<keyword id="KW-0520">NAD</keyword>
<keyword id="KW-0554">One-carbon metabolism</keyword>
<evidence type="ECO:0000250" key="1"/>
<evidence type="ECO:0000305" key="2"/>
<reference key="1">
    <citation type="journal article" date="1995" name="Plant Mol. Biol.">
        <title>Expression patterns of three genes in the stem of lucerne (Medicago sativa).</title>
        <authorList>
            <person name="Abrahams S."/>
            <person name="Hayes C.M."/>
            <person name="Watson J.M."/>
        </authorList>
    </citation>
    <scope>NUCLEOTIDE SEQUENCE [MRNA]</scope>
    <source>
        <strain>cv. Siriver</strain>
        <tissue>Stem</tissue>
    </source>
</reference>
<gene>
    <name type="primary">SAHH</name>
</gene>
<name>SAHH_MEDSA</name>
<proteinExistence type="evidence at transcript level"/>
<comment type="function">
    <text evidence="1">Adenosylhomocysteine is a competitive inhibitor of S-adenosyl-L-methionine-dependent methyl transferase reactions; therefore adenosylhomocysteinase may play a key role in the control of methylations via regulation of the intracellular concentration of adenosylhomocysteine.</text>
</comment>
<comment type="catalytic activity">
    <reaction>
        <text>S-adenosyl-L-homocysteine + H2O = L-homocysteine + adenosine</text>
        <dbReference type="Rhea" id="RHEA:21708"/>
        <dbReference type="ChEBI" id="CHEBI:15377"/>
        <dbReference type="ChEBI" id="CHEBI:16335"/>
        <dbReference type="ChEBI" id="CHEBI:57856"/>
        <dbReference type="ChEBI" id="CHEBI:58199"/>
        <dbReference type="EC" id="3.13.2.1"/>
    </reaction>
</comment>
<comment type="cofactor">
    <cofactor evidence="1">
        <name>NAD(+)</name>
        <dbReference type="ChEBI" id="CHEBI:57540"/>
    </cofactor>
    <text evidence="1">Binds 1 NAD(+) per subunit.</text>
</comment>
<comment type="pathway">
    <text>Amino-acid biosynthesis; L-homocysteine biosynthesis; L-homocysteine from S-adenosyl-L-homocysteine: step 1/1.</text>
</comment>
<comment type="similarity">
    <text evidence="2">Belongs to the adenosylhomocysteinase family.</text>
</comment>
<feature type="chain" id="PRO_0000116925" description="Adenosylhomocysteinase">
    <location>
        <begin position="1"/>
        <end position="485"/>
    </location>
</feature>
<feature type="binding site" evidence="1">
    <location>
        <position position="64"/>
    </location>
    <ligand>
        <name>substrate</name>
    </ligand>
</feature>
<feature type="binding site" evidence="1">
    <location>
        <position position="139"/>
    </location>
    <ligand>
        <name>substrate</name>
    </ligand>
</feature>
<feature type="binding site" evidence="1">
    <location>
        <position position="205"/>
    </location>
    <ligand>
        <name>substrate</name>
    </ligand>
</feature>
<feature type="binding site" evidence="1">
    <location>
        <begin position="206"/>
        <end position="208"/>
    </location>
    <ligand>
        <name>NAD(+)</name>
        <dbReference type="ChEBI" id="CHEBI:57540"/>
    </ligand>
</feature>
<feature type="binding site" evidence="1">
    <location>
        <position position="235"/>
    </location>
    <ligand>
        <name>substrate</name>
    </ligand>
</feature>
<feature type="binding site" evidence="1">
    <location>
        <position position="239"/>
    </location>
    <ligand>
        <name>substrate</name>
    </ligand>
</feature>
<feature type="binding site" evidence="1">
    <location>
        <position position="240"/>
    </location>
    <ligand>
        <name>NAD(+)</name>
        <dbReference type="ChEBI" id="CHEBI:57540"/>
    </ligand>
</feature>
<feature type="binding site" evidence="1">
    <location>
        <begin position="269"/>
        <end position="274"/>
    </location>
    <ligand>
        <name>NAD(+)</name>
        <dbReference type="ChEBI" id="CHEBI:57540"/>
    </ligand>
</feature>
<feature type="binding site" evidence="1">
    <location>
        <position position="292"/>
    </location>
    <ligand>
        <name>NAD(+)</name>
        <dbReference type="ChEBI" id="CHEBI:57540"/>
    </ligand>
</feature>
<feature type="binding site" evidence="1">
    <location>
        <position position="327"/>
    </location>
    <ligand>
        <name>NAD(+)</name>
        <dbReference type="ChEBI" id="CHEBI:57540"/>
    </ligand>
</feature>
<feature type="binding site" evidence="1">
    <location>
        <begin position="348"/>
        <end position="350"/>
    </location>
    <ligand>
        <name>NAD(+)</name>
        <dbReference type="ChEBI" id="CHEBI:57540"/>
    </ligand>
</feature>
<feature type="binding site" evidence="1">
    <location>
        <position position="397"/>
    </location>
    <ligand>
        <name>NAD(+)</name>
        <dbReference type="ChEBI" id="CHEBI:57540"/>
    </ligand>
</feature>
<dbReference type="EC" id="3.13.2.1"/>
<dbReference type="EMBL" id="L36119">
    <property type="protein sequence ID" value="AAB41814.1"/>
    <property type="molecule type" value="mRNA"/>
</dbReference>
<dbReference type="SMR" id="P50246"/>
<dbReference type="UniPathway" id="UPA00314">
    <property type="reaction ID" value="UER00076"/>
</dbReference>
<dbReference type="GO" id="GO:0005829">
    <property type="term" value="C:cytosol"/>
    <property type="evidence" value="ECO:0007669"/>
    <property type="project" value="TreeGrafter"/>
</dbReference>
<dbReference type="GO" id="GO:0004013">
    <property type="term" value="F:adenosylhomocysteinase activity"/>
    <property type="evidence" value="ECO:0007669"/>
    <property type="project" value="RHEA"/>
</dbReference>
<dbReference type="GO" id="GO:0006730">
    <property type="term" value="P:one-carbon metabolic process"/>
    <property type="evidence" value="ECO:0007669"/>
    <property type="project" value="UniProtKB-KW"/>
</dbReference>
<dbReference type="GO" id="GO:0033353">
    <property type="term" value="P:S-adenosylmethionine cycle"/>
    <property type="evidence" value="ECO:0007669"/>
    <property type="project" value="TreeGrafter"/>
</dbReference>
<dbReference type="CDD" id="cd00401">
    <property type="entry name" value="SAHH"/>
    <property type="match status" value="1"/>
</dbReference>
<dbReference type="FunFam" id="3.40.50.720:FF:000004">
    <property type="entry name" value="Adenosylhomocysteinase"/>
    <property type="match status" value="1"/>
</dbReference>
<dbReference type="Gene3D" id="3.40.50.1480">
    <property type="entry name" value="Adenosylhomocysteinase-like"/>
    <property type="match status" value="1"/>
</dbReference>
<dbReference type="Gene3D" id="3.40.50.720">
    <property type="entry name" value="NAD(P)-binding Rossmann-like Domain"/>
    <property type="match status" value="1"/>
</dbReference>
<dbReference type="HAMAP" id="MF_00563">
    <property type="entry name" value="AdoHcyase"/>
    <property type="match status" value="1"/>
</dbReference>
<dbReference type="InterPro" id="IPR042172">
    <property type="entry name" value="Adenosylhomocyst_ase-like_sf"/>
</dbReference>
<dbReference type="InterPro" id="IPR000043">
    <property type="entry name" value="Adenosylhomocysteinase-like"/>
</dbReference>
<dbReference type="InterPro" id="IPR015878">
    <property type="entry name" value="Ado_hCys_hydrolase_NAD-bd"/>
</dbReference>
<dbReference type="InterPro" id="IPR036291">
    <property type="entry name" value="NAD(P)-bd_dom_sf"/>
</dbReference>
<dbReference type="InterPro" id="IPR020082">
    <property type="entry name" value="S-Ado-L-homoCys_hydrolase_CS"/>
</dbReference>
<dbReference type="NCBIfam" id="TIGR00936">
    <property type="entry name" value="ahcY"/>
    <property type="match status" value="1"/>
</dbReference>
<dbReference type="NCBIfam" id="NF004005">
    <property type="entry name" value="PRK05476.2-3"/>
    <property type="match status" value="1"/>
</dbReference>
<dbReference type="PANTHER" id="PTHR23420">
    <property type="entry name" value="ADENOSYLHOMOCYSTEINASE"/>
    <property type="match status" value="1"/>
</dbReference>
<dbReference type="PANTHER" id="PTHR23420:SF0">
    <property type="entry name" value="ADENOSYLHOMOCYSTEINASE"/>
    <property type="match status" value="1"/>
</dbReference>
<dbReference type="Pfam" id="PF05221">
    <property type="entry name" value="AdoHcyase"/>
    <property type="match status" value="1"/>
</dbReference>
<dbReference type="Pfam" id="PF00670">
    <property type="entry name" value="AdoHcyase_NAD"/>
    <property type="match status" value="1"/>
</dbReference>
<dbReference type="PIRSF" id="PIRSF001109">
    <property type="entry name" value="Ad_hcy_hydrolase"/>
    <property type="match status" value="1"/>
</dbReference>
<dbReference type="SMART" id="SM00996">
    <property type="entry name" value="AdoHcyase"/>
    <property type="match status" value="1"/>
</dbReference>
<dbReference type="SMART" id="SM00997">
    <property type="entry name" value="AdoHcyase_NAD"/>
    <property type="match status" value="1"/>
</dbReference>
<dbReference type="SUPFAM" id="SSF52283">
    <property type="entry name" value="Formate/glycerate dehydrogenase catalytic domain-like"/>
    <property type="match status" value="2"/>
</dbReference>
<dbReference type="SUPFAM" id="SSF51735">
    <property type="entry name" value="NAD(P)-binding Rossmann-fold domains"/>
    <property type="match status" value="1"/>
</dbReference>
<dbReference type="PROSITE" id="PS00738">
    <property type="entry name" value="ADOHCYASE_1"/>
    <property type="match status" value="1"/>
</dbReference>
<dbReference type="PROSITE" id="PS00739">
    <property type="entry name" value="ADOHCYASE_2"/>
    <property type="match status" value="1"/>
</dbReference>
<sequence>MALLVETTTSGREYKVKDMSQADFGRLEIELAEVEMPGLMSCRTEFGPSQPFKGARITGSLHMTIQTAVLIETLTALGAEVRWCSCNIFSTQDHAAAAIARDSAAVFAWKGETLQEYWWCSERALDWGPGGGPDLIVDDGGDVTLLIHEGVKAEEVFEKTGQLPDPSSTDNAEMQIVLTIIRDGLKTDPKRYQKMKTRIVGVSEETTTGVKRLYQMQASGTLLFPAINVNDSVTKSKFDNLYGCRHSLPDGLMRATDVMIAGKVAVVCGYGDVGKGCAAALKQGGARVIVTEIDPICALQALMEGLQVLTLEDVISEADIFVTTTGNKDIIMVSDMKKMKNNAIVCNIGHFDNEIDMHGLETYPGVKRITIKPQTDRWVFPETKSGIIVLAEGRLMNLGCATGHPSFVMSCSFTNQVIAQIELWKEKTSGKYEKKVYVLPKHLDEKVAALHLGQLGAKLTKLSKDQADYISVPVEGPYKPAHYRY</sequence>
<protein>
    <recommendedName>
        <fullName>Adenosylhomocysteinase</fullName>
        <shortName>AdoHcyase</shortName>
        <ecNumber>3.13.2.1</ecNumber>
    </recommendedName>
    <alternativeName>
        <fullName>S-adenosyl-L-homocysteine hydrolase</fullName>
    </alternativeName>
</protein>
<accession>P50246</accession>